<accession>Q57C78</accession>
<keyword id="KW-0131">Cell cycle</keyword>
<keyword id="KW-0132">Cell division</keyword>
<keyword id="KW-0997">Cell inner membrane</keyword>
<keyword id="KW-1003">Cell membrane</keyword>
<keyword id="KW-0133">Cell shape</keyword>
<keyword id="KW-0961">Cell wall biogenesis/degradation</keyword>
<keyword id="KW-0328">Glycosyltransferase</keyword>
<keyword id="KW-0472">Membrane</keyword>
<keyword id="KW-0573">Peptidoglycan synthesis</keyword>
<keyword id="KW-0808">Transferase</keyword>
<sequence>MDNLANQGVIVLAAGGTGGHLFPAEALAHELRARGWDVHLATDARAQRFVGAFAQDHVHVIRSATIAGRNPVALLKTFWSLWQGNLDSRKLFRRLKPKLVVGFGGYPTLPPLYAASNMGIPTLIHEQNAVMGRANKGLAGRVKAIAGGFLPENSGAYAAKTVITGNPVRSPVLVAAATPYTPAGKDDRFRLLVFGGSQGAQFFSQAIPAAVALLPEHERARLLITQQARKEDEASARQAYEKLGVPADVAPFFNDMPARMADAHFVIARSGASTVSEITVIGRPAMLVPFPHALDHDQAANAAALAAAGGAEVVRQADLSPQRLAEMLQSAMNEPERLEQQAKAAKSVGKPDAARLLADLAEAIASGKTVQEFKEGNRP</sequence>
<name>MURG_BRUAB</name>
<reference key="1">
    <citation type="journal article" date="2005" name="J. Bacteriol.">
        <title>Completion of the genome sequence of Brucella abortus and comparison to the highly similar genomes of Brucella melitensis and Brucella suis.</title>
        <authorList>
            <person name="Halling S.M."/>
            <person name="Peterson-Burch B.D."/>
            <person name="Bricker B.J."/>
            <person name="Zuerner R.L."/>
            <person name="Qing Z."/>
            <person name="Li L.-L."/>
            <person name="Kapur V."/>
            <person name="Alt D.P."/>
            <person name="Olsen S.C."/>
        </authorList>
    </citation>
    <scope>NUCLEOTIDE SEQUENCE [LARGE SCALE GENOMIC DNA]</scope>
    <source>
        <strain>9-941</strain>
    </source>
</reference>
<evidence type="ECO:0000255" key="1">
    <source>
        <dbReference type="HAMAP-Rule" id="MF_00033"/>
    </source>
</evidence>
<comment type="function">
    <text evidence="1">Cell wall formation. Catalyzes the transfer of a GlcNAc subunit on undecaprenyl-pyrophosphoryl-MurNAc-pentapeptide (lipid intermediate I) to form undecaprenyl-pyrophosphoryl-MurNAc-(pentapeptide)GlcNAc (lipid intermediate II).</text>
</comment>
<comment type="catalytic activity">
    <reaction evidence="1">
        <text>di-trans,octa-cis-undecaprenyl diphospho-N-acetyl-alpha-D-muramoyl-L-alanyl-D-glutamyl-meso-2,6-diaminopimeloyl-D-alanyl-D-alanine + UDP-N-acetyl-alpha-D-glucosamine = di-trans,octa-cis-undecaprenyl diphospho-[N-acetyl-alpha-D-glucosaminyl-(1-&gt;4)]-N-acetyl-alpha-D-muramoyl-L-alanyl-D-glutamyl-meso-2,6-diaminopimeloyl-D-alanyl-D-alanine + UDP + H(+)</text>
        <dbReference type="Rhea" id="RHEA:31227"/>
        <dbReference type="ChEBI" id="CHEBI:15378"/>
        <dbReference type="ChEBI" id="CHEBI:57705"/>
        <dbReference type="ChEBI" id="CHEBI:58223"/>
        <dbReference type="ChEBI" id="CHEBI:61387"/>
        <dbReference type="ChEBI" id="CHEBI:61388"/>
        <dbReference type="EC" id="2.4.1.227"/>
    </reaction>
</comment>
<comment type="pathway">
    <text evidence="1">Cell wall biogenesis; peptidoglycan biosynthesis.</text>
</comment>
<comment type="subcellular location">
    <subcellularLocation>
        <location evidence="1">Cell inner membrane</location>
        <topology evidence="1">Peripheral membrane protein</topology>
        <orientation evidence="1">Cytoplasmic side</orientation>
    </subcellularLocation>
</comment>
<comment type="similarity">
    <text evidence="1">Belongs to the glycosyltransferase 28 family. MurG subfamily.</text>
</comment>
<dbReference type="EC" id="2.4.1.227" evidence="1"/>
<dbReference type="EMBL" id="AE017223">
    <property type="protein sequence ID" value="AAX74756.1"/>
    <property type="molecule type" value="Genomic_DNA"/>
</dbReference>
<dbReference type="RefSeq" id="WP_002964539.1">
    <property type="nucleotide sequence ID" value="NC_006932.1"/>
</dbReference>
<dbReference type="SMR" id="Q57C78"/>
<dbReference type="CAZy" id="GT28">
    <property type="family name" value="Glycosyltransferase Family 28"/>
</dbReference>
<dbReference type="EnsemblBacteria" id="AAX74756">
    <property type="protein sequence ID" value="AAX74756"/>
    <property type="gene ID" value="BruAb1_1426"/>
</dbReference>
<dbReference type="GeneID" id="93016271"/>
<dbReference type="KEGG" id="bmb:BruAb1_1426"/>
<dbReference type="HOGENOM" id="CLU_037404_2_1_5"/>
<dbReference type="UniPathway" id="UPA00219"/>
<dbReference type="Proteomes" id="UP000000540">
    <property type="component" value="Chromosome I"/>
</dbReference>
<dbReference type="GO" id="GO:0005886">
    <property type="term" value="C:plasma membrane"/>
    <property type="evidence" value="ECO:0007669"/>
    <property type="project" value="UniProtKB-SubCell"/>
</dbReference>
<dbReference type="GO" id="GO:0051991">
    <property type="term" value="F:UDP-N-acetyl-D-glucosamine:N-acetylmuramoyl-L-alanyl-D-glutamyl-meso-2,6-diaminopimelyl-D-alanyl-D-alanine-diphosphoundecaprenol 4-beta-N-acetylglucosaminlytransferase activity"/>
    <property type="evidence" value="ECO:0007669"/>
    <property type="project" value="RHEA"/>
</dbReference>
<dbReference type="GO" id="GO:0050511">
    <property type="term" value="F:undecaprenyldiphospho-muramoylpentapeptide beta-N-acetylglucosaminyltransferase activity"/>
    <property type="evidence" value="ECO:0007669"/>
    <property type="project" value="UniProtKB-UniRule"/>
</dbReference>
<dbReference type="GO" id="GO:0005975">
    <property type="term" value="P:carbohydrate metabolic process"/>
    <property type="evidence" value="ECO:0007669"/>
    <property type="project" value="InterPro"/>
</dbReference>
<dbReference type="GO" id="GO:0051301">
    <property type="term" value="P:cell division"/>
    <property type="evidence" value="ECO:0007669"/>
    <property type="project" value="UniProtKB-KW"/>
</dbReference>
<dbReference type="GO" id="GO:0071555">
    <property type="term" value="P:cell wall organization"/>
    <property type="evidence" value="ECO:0007669"/>
    <property type="project" value="UniProtKB-KW"/>
</dbReference>
<dbReference type="GO" id="GO:0030259">
    <property type="term" value="P:lipid glycosylation"/>
    <property type="evidence" value="ECO:0007669"/>
    <property type="project" value="UniProtKB-UniRule"/>
</dbReference>
<dbReference type="GO" id="GO:0009252">
    <property type="term" value="P:peptidoglycan biosynthetic process"/>
    <property type="evidence" value="ECO:0007669"/>
    <property type="project" value="UniProtKB-UniRule"/>
</dbReference>
<dbReference type="GO" id="GO:0008360">
    <property type="term" value="P:regulation of cell shape"/>
    <property type="evidence" value="ECO:0007669"/>
    <property type="project" value="UniProtKB-KW"/>
</dbReference>
<dbReference type="CDD" id="cd03785">
    <property type="entry name" value="GT28_MurG"/>
    <property type="match status" value="1"/>
</dbReference>
<dbReference type="Gene3D" id="3.40.50.2000">
    <property type="entry name" value="Glycogen Phosphorylase B"/>
    <property type="match status" value="2"/>
</dbReference>
<dbReference type="HAMAP" id="MF_00033">
    <property type="entry name" value="MurG"/>
    <property type="match status" value="1"/>
</dbReference>
<dbReference type="InterPro" id="IPR006009">
    <property type="entry name" value="GlcNAc_MurG"/>
</dbReference>
<dbReference type="InterPro" id="IPR007235">
    <property type="entry name" value="Glyco_trans_28_C"/>
</dbReference>
<dbReference type="InterPro" id="IPR004276">
    <property type="entry name" value="GlycoTrans_28_N"/>
</dbReference>
<dbReference type="NCBIfam" id="TIGR01133">
    <property type="entry name" value="murG"/>
    <property type="match status" value="1"/>
</dbReference>
<dbReference type="PANTHER" id="PTHR21015:SF22">
    <property type="entry name" value="GLYCOSYLTRANSFERASE"/>
    <property type="match status" value="1"/>
</dbReference>
<dbReference type="PANTHER" id="PTHR21015">
    <property type="entry name" value="UDP-N-ACETYLGLUCOSAMINE--N-ACETYLMURAMYL-(PENTAPEPTIDE) PYROPHOSPHORYL-UNDECAPRENOL N-ACETYLGLUCOSAMINE TRANSFERASE 1"/>
    <property type="match status" value="1"/>
</dbReference>
<dbReference type="Pfam" id="PF04101">
    <property type="entry name" value="Glyco_tran_28_C"/>
    <property type="match status" value="1"/>
</dbReference>
<dbReference type="Pfam" id="PF03033">
    <property type="entry name" value="Glyco_transf_28"/>
    <property type="match status" value="1"/>
</dbReference>
<dbReference type="SUPFAM" id="SSF53756">
    <property type="entry name" value="UDP-Glycosyltransferase/glycogen phosphorylase"/>
    <property type="match status" value="1"/>
</dbReference>
<gene>
    <name evidence="1" type="primary">murG</name>
    <name type="ordered locus">BruAb1_1426</name>
</gene>
<proteinExistence type="inferred from homology"/>
<feature type="chain" id="PRO_0000225035" description="UDP-N-acetylglucosamine--N-acetylmuramyl-(pentapeptide) pyrophosphoryl-undecaprenol N-acetylglucosamine transferase">
    <location>
        <begin position="1"/>
        <end position="379"/>
    </location>
</feature>
<feature type="binding site" evidence="1">
    <location>
        <begin position="17"/>
        <end position="19"/>
    </location>
    <ligand>
        <name>UDP-N-acetyl-alpha-D-glucosamine</name>
        <dbReference type="ChEBI" id="CHEBI:57705"/>
    </ligand>
</feature>
<feature type="binding site" evidence="1">
    <location>
        <position position="128"/>
    </location>
    <ligand>
        <name>UDP-N-acetyl-alpha-D-glucosamine</name>
        <dbReference type="ChEBI" id="CHEBI:57705"/>
    </ligand>
</feature>
<feature type="binding site" evidence="1">
    <location>
        <position position="169"/>
    </location>
    <ligand>
        <name>UDP-N-acetyl-alpha-D-glucosamine</name>
        <dbReference type="ChEBI" id="CHEBI:57705"/>
    </ligand>
</feature>
<feature type="binding site" evidence="1">
    <location>
        <position position="197"/>
    </location>
    <ligand>
        <name>UDP-N-acetyl-alpha-D-glucosamine</name>
        <dbReference type="ChEBI" id="CHEBI:57705"/>
    </ligand>
</feature>
<feature type="binding site" evidence="1">
    <location>
        <position position="298"/>
    </location>
    <ligand>
        <name>UDP-N-acetyl-alpha-D-glucosamine</name>
        <dbReference type="ChEBI" id="CHEBI:57705"/>
    </ligand>
</feature>
<organism>
    <name type="scientific">Brucella abortus biovar 1 (strain 9-941)</name>
    <dbReference type="NCBI Taxonomy" id="262698"/>
    <lineage>
        <taxon>Bacteria</taxon>
        <taxon>Pseudomonadati</taxon>
        <taxon>Pseudomonadota</taxon>
        <taxon>Alphaproteobacteria</taxon>
        <taxon>Hyphomicrobiales</taxon>
        <taxon>Brucellaceae</taxon>
        <taxon>Brucella/Ochrobactrum group</taxon>
        <taxon>Brucella</taxon>
    </lineage>
</organism>
<protein>
    <recommendedName>
        <fullName evidence="1">UDP-N-acetylglucosamine--N-acetylmuramyl-(pentapeptide) pyrophosphoryl-undecaprenol N-acetylglucosamine transferase</fullName>
        <ecNumber evidence="1">2.4.1.227</ecNumber>
    </recommendedName>
    <alternativeName>
        <fullName evidence="1">Undecaprenyl-PP-MurNAc-pentapeptide-UDPGlcNAc GlcNAc transferase</fullName>
    </alternativeName>
</protein>